<gene>
    <name type="primary">CNDP2</name>
</gene>
<organism>
    <name type="scientific">Pongo abelii</name>
    <name type="common">Sumatran orangutan</name>
    <name type="synonym">Pongo pygmaeus abelii</name>
    <dbReference type="NCBI Taxonomy" id="9601"/>
    <lineage>
        <taxon>Eukaryota</taxon>
        <taxon>Metazoa</taxon>
        <taxon>Chordata</taxon>
        <taxon>Craniata</taxon>
        <taxon>Vertebrata</taxon>
        <taxon>Euteleostomi</taxon>
        <taxon>Mammalia</taxon>
        <taxon>Eutheria</taxon>
        <taxon>Euarchontoglires</taxon>
        <taxon>Primates</taxon>
        <taxon>Haplorrhini</taxon>
        <taxon>Catarrhini</taxon>
        <taxon>Hominidae</taxon>
        <taxon>Pongo</taxon>
    </lineage>
</organism>
<sequence>MAALTTLFKYIDENQDRYIKKLAKWVAIQSVSAWPEKRGEIRRMMEVAAADVKQLGGSVELVDIGKQKLPDGSEIPLPPILLGRLGSDPQKKTVCIYGHLDVQPAALEDGWDSEPFTLVERDGKLHGRGSTDDKGPVAGWINALEAYQKTDQEIPVNVRFCLEGMEESGSEGLDELIFAQKDTFFKDVDYVCISDNYWLGKKKPCITYGLRGICYFFIEVECSNKDLHSGVYGGSVHEAMTDLILLMGSLVDKRGNILIPGINEAVAAVTEEEHKLYDDIDFDIEEFAKDVGAQILLHSNKKDILMHRWRYPSLSLHGIEGAFSGSGAKTVIPRKVVGKFSIRLVPNMTPEVVSEQVTSYLTKKFAELRSPNEFKVYMGHGGKPWVSDFSHPHYVAGRRAMRTVFGVEPDLTREGGSIPVTLTFQEATGKNVMLLPVGSADDGAHSQNEKLNRHNYIEGTKMLAAYLYEVSQLKD</sequence>
<reference key="1">
    <citation type="submission" date="2004-11" db="EMBL/GenBank/DDBJ databases">
        <authorList>
            <consortium name="The German cDNA consortium"/>
        </authorList>
    </citation>
    <scope>NUCLEOTIDE SEQUENCE [LARGE SCALE MRNA]</scope>
    <source>
        <tissue>Brain cortex</tissue>
        <tissue>Kidney</tissue>
    </source>
</reference>
<name>CNDP2_PONAB</name>
<protein>
    <recommendedName>
        <fullName>Cytosolic non-specific dipeptidase</fullName>
        <ecNumber evidence="3 4">3.4.13.18</ecNumber>
    </recommendedName>
    <alternativeName>
        <fullName>CNDP dipeptidase 2</fullName>
    </alternativeName>
    <alternativeName>
        <fullName evidence="4">Threonyl dipeptidase</fullName>
    </alternativeName>
</protein>
<evidence type="ECO:0000250" key="1"/>
<evidence type="ECO:0000250" key="2">
    <source>
        <dbReference type="UniProtKB" id="Q6Q0N1"/>
    </source>
</evidence>
<evidence type="ECO:0000250" key="3">
    <source>
        <dbReference type="UniProtKB" id="Q96KP4"/>
    </source>
</evidence>
<evidence type="ECO:0000250" key="4">
    <source>
        <dbReference type="UniProtKB" id="Q9D1A2"/>
    </source>
</evidence>
<evidence type="ECO:0000305" key="5"/>
<proteinExistence type="evidence at transcript level"/>
<dbReference type="EC" id="3.4.13.18" evidence="3 4"/>
<dbReference type="EMBL" id="CR860879">
    <property type="protein sequence ID" value="CAH92986.1"/>
    <property type="molecule type" value="mRNA"/>
</dbReference>
<dbReference type="EMBL" id="CR861428">
    <property type="protein sequence ID" value="CAH93484.1"/>
    <property type="molecule type" value="mRNA"/>
</dbReference>
<dbReference type="RefSeq" id="NP_001127615.1">
    <property type="nucleotide sequence ID" value="NM_001134143.1"/>
</dbReference>
<dbReference type="SMR" id="Q5R432"/>
<dbReference type="FunCoup" id="Q5R432">
    <property type="interactions" value="1774"/>
</dbReference>
<dbReference type="STRING" id="9601.ENSPPYP00000010372"/>
<dbReference type="MEROPS" id="M20.005"/>
<dbReference type="GeneID" id="100174694"/>
<dbReference type="KEGG" id="pon:100174694"/>
<dbReference type="CTD" id="55748"/>
<dbReference type="eggNOG" id="KOG2276">
    <property type="taxonomic scope" value="Eukaryota"/>
</dbReference>
<dbReference type="InParanoid" id="Q5R432"/>
<dbReference type="OrthoDB" id="7832001at2759"/>
<dbReference type="Proteomes" id="UP000001595">
    <property type="component" value="Unplaced"/>
</dbReference>
<dbReference type="GO" id="GO:0005829">
    <property type="term" value="C:cytosol"/>
    <property type="evidence" value="ECO:0007669"/>
    <property type="project" value="TreeGrafter"/>
</dbReference>
<dbReference type="GO" id="GO:0004180">
    <property type="term" value="F:carboxypeptidase activity"/>
    <property type="evidence" value="ECO:0007669"/>
    <property type="project" value="UniProtKB-KW"/>
</dbReference>
<dbReference type="GO" id="GO:0046872">
    <property type="term" value="F:metal ion binding"/>
    <property type="evidence" value="ECO:0007669"/>
    <property type="project" value="UniProtKB-KW"/>
</dbReference>
<dbReference type="GO" id="GO:0070573">
    <property type="term" value="F:metallodipeptidase activity"/>
    <property type="evidence" value="ECO:0007669"/>
    <property type="project" value="InterPro"/>
</dbReference>
<dbReference type="GO" id="GO:0006508">
    <property type="term" value="P:proteolysis"/>
    <property type="evidence" value="ECO:0007669"/>
    <property type="project" value="UniProtKB-KW"/>
</dbReference>
<dbReference type="CDD" id="cd05676">
    <property type="entry name" value="M20_dipept_like_CNDP"/>
    <property type="match status" value="1"/>
</dbReference>
<dbReference type="FunFam" id="3.30.70.360:FF:000008">
    <property type="entry name" value="Cytosolic non-specific dipeptidase"/>
    <property type="match status" value="1"/>
</dbReference>
<dbReference type="FunFam" id="3.40.630.10:FF:000014">
    <property type="entry name" value="Cytosolic non-specific dipeptidase"/>
    <property type="match status" value="1"/>
</dbReference>
<dbReference type="Gene3D" id="3.30.70.360">
    <property type="match status" value="1"/>
</dbReference>
<dbReference type="Gene3D" id="3.40.630.10">
    <property type="entry name" value="Zn peptidases"/>
    <property type="match status" value="1"/>
</dbReference>
<dbReference type="InterPro" id="IPR001261">
    <property type="entry name" value="ArgE/DapE_CS"/>
</dbReference>
<dbReference type="InterPro" id="IPR017153">
    <property type="entry name" value="CNDP/DUG1"/>
</dbReference>
<dbReference type="InterPro" id="IPR051458">
    <property type="entry name" value="Cyt/Met_Dipeptidase"/>
</dbReference>
<dbReference type="InterPro" id="IPR002933">
    <property type="entry name" value="Peptidase_M20"/>
</dbReference>
<dbReference type="InterPro" id="IPR011650">
    <property type="entry name" value="Peptidase_M20_dimer"/>
</dbReference>
<dbReference type="PANTHER" id="PTHR43270">
    <property type="entry name" value="BETA-ALA-HIS DIPEPTIDASE"/>
    <property type="match status" value="1"/>
</dbReference>
<dbReference type="PANTHER" id="PTHR43270:SF11">
    <property type="entry name" value="CYTOSOLIC NON-SPECIFIC DIPEPTIDASE"/>
    <property type="match status" value="1"/>
</dbReference>
<dbReference type="Pfam" id="PF07687">
    <property type="entry name" value="M20_dimer"/>
    <property type="match status" value="1"/>
</dbReference>
<dbReference type="Pfam" id="PF01546">
    <property type="entry name" value="Peptidase_M20"/>
    <property type="match status" value="1"/>
</dbReference>
<dbReference type="PIRSF" id="PIRSF037242">
    <property type="entry name" value="CNDP_dipeptidase"/>
    <property type="match status" value="1"/>
</dbReference>
<dbReference type="SUPFAM" id="SSF53187">
    <property type="entry name" value="Zn-dependent exopeptidases"/>
    <property type="match status" value="1"/>
</dbReference>
<dbReference type="PROSITE" id="PS00759">
    <property type="entry name" value="ARGE_DAPE_CPG2_2"/>
    <property type="match status" value="1"/>
</dbReference>
<accession>Q5R432</accession>
<accession>Q5R5I0</accession>
<keyword id="KW-0007">Acetylation</keyword>
<keyword id="KW-0121">Carboxypeptidase</keyword>
<keyword id="KW-0963">Cytoplasm</keyword>
<keyword id="KW-0378">Hydrolase</keyword>
<keyword id="KW-0464">Manganese</keyword>
<keyword id="KW-0479">Metal-binding</keyword>
<keyword id="KW-0482">Metalloprotease</keyword>
<keyword id="KW-0597">Phosphoprotein</keyword>
<keyword id="KW-0645">Protease</keyword>
<keyword id="KW-1185">Reference proteome</keyword>
<comment type="function">
    <text evidence="3 4">Catalyzes the peptide bond hydrolysis in dipeptides, displaying a non-redundant activity toward threonyl dipeptides. Mediates threonyl dipeptide catabolism in a tissue-specific way (By similarity). Has high dipeptidase activity toward cysteinylglycine, an intermediate metabolite in glutathione metabolism. Metabolizes N-lactoyl-amino acids, both through hydrolysis to form lactic acid and amino acids, as well as through their formation by reverse proteolysis. Plays a role in the regulation of cell cycle arrest and apoptosis (By similarity).</text>
</comment>
<comment type="catalytic activity">
    <reaction evidence="3">
        <text>Hydrolysis of dipeptides, preferentially hydrophobic dipeptides including prolyl amino acids.</text>
        <dbReference type="EC" id="3.4.13.18"/>
    </reaction>
</comment>
<comment type="catalytic activity">
    <reaction evidence="4">
        <text>L-threonyl-L-threonine + H2O = 2 L-threonine</text>
        <dbReference type="Rhea" id="RHEA:67360"/>
        <dbReference type="ChEBI" id="CHEBI:15377"/>
        <dbReference type="ChEBI" id="CHEBI:57926"/>
        <dbReference type="ChEBI" id="CHEBI:169953"/>
    </reaction>
    <physiologicalReaction direction="left-to-right" evidence="4">
        <dbReference type="Rhea" id="RHEA:67361"/>
    </physiologicalReaction>
</comment>
<comment type="catalytic activity">
    <reaction evidence="4">
        <text>L-threonyl-L-serine + H2O = L-threonine + L-serine</text>
        <dbReference type="Rhea" id="RHEA:67364"/>
        <dbReference type="ChEBI" id="CHEBI:15377"/>
        <dbReference type="ChEBI" id="CHEBI:33384"/>
        <dbReference type="ChEBI" id="CHEBI:57926"/>
        <dbReference type="ChEBI" id="CHEBI:169954"/>
    </reaction>
    <physiologicalReaction direction="left-to-right" evidence="4">
        <dbReference type="Rhea" id="RHEA:67365"/>
    </physiologicalReaction>
</comment>
<comment type="catalytic activity">
    <reaction evidence="4">
        <text>L-seryl-L-threonine + H2O = L-threonine + L-serine</text>
        <dbReference type="Rhea" id="RHEA:67372"/>
        <dbReference type="ChEBI" id="CHEBI:15377"/>
        <dbReference type="ChEBI" id="CHEBI:33384"/>
        <dbReference type="ChEBI" id="CHEBI:57926"/>
        <dbReference type="ChEBI" id="CHEBI:169955"/>
    </reaction>
    <physiologicalReaction direction="left-to-right" evidence="4">
        <dbReference type="Rhea" id="RHEA:67373"/>
    </physiologicalReaction>
</comment>
<comment type="catalytic activity">
    <reaction evidence="3">
        <text>L-cysteinylglycine + H2O = L-cysteine + glycine</text>
        <dbReference type="Rhea" id="RHEA:28783"/>
        <dbReference type="ChEBI" id="CHEBI:15377"/>
        <dbReference type="ChEBI" id="CHEBI:35235"/>
        <dbReference type="ChEBI" id="CHEBI:57305"/>
        <dbReference type="ChEBI" id="CHEBI:61694"/>
    </reaction>
    <physiologicalReaction direction="left-to-right" evidence="3">
        <dbReference type="Rhea" id="RHEA:28784"/>
    </physiologicalReaction>
</comment>
<comment type="catalytic activity">
    <reaction evidence="3">
        <text>(S)-lactate + L-phenylalanine = N-[(S)-lactoyl]-L-phenylalanine + H2O</text>
        <dbReference type="Rhea" id="RHEA:66724"/>
        <dbReference type="ChEBI" id="CHEBI:15377"/>
        <dbReference type="ChEBI" id="CHEBI:16651"/>
        <dbReference type="ChEBI" id="CHEBI:58095"/>
        <dbReference type="ChEBI" id="CHEBI:167456"/>
    </reaction>
    <physiologicalReaction direction="left-to-right" evidence="3">
        <dbReference type="Rhea" id="RHEA:66725"/>
    </physiologicalReaction>
    <physiologicalReaction direction="right-to-left" evidence="3">
        <dbReference type="Rhea" id="RHEA:66726"/>
    </physiologicalReaction>
</comment>
<comment type="cofactor">
    <cofactor evidence="3">
        <name>Mn(2+)</name>
        <dbReference type="ChEBI" id="CHEBI:29035"/>
    </cofactor>
    <text evidence="3">Binds 2 manganese ions per subunit.</text>
</comment>
<comment type="subunit">
    <text evidence="3">Homodimer.</text>
</comment>
<comment type="subcellular location">
    <subcellularLocation>
        <location evidence="3">Cytoplasm</location>
    </subcellularLocation>
</comment>
<comment type="similarity">
    <text evidence="5">Belongs to the peptidase M20A family.</text>
</comment>
<feature type="initiator methionine" description="Removed" evidence="3">
    <location>
        <position position="1"/>
    </location>
</feature>
<feature type="chain" id="PRO_0000288495" description="Cytosolic non-specific dipeptidase">
    <location>
        <begin position="2"/>
        <end position="475"/>
    </location>
</feature>
<feature type="active site" evidence="1">
    <location>
        <position position="101"/>
    </location>
</feature>
<feature type="active site" description="Proton acceptor" evidence="1">
    <location>
        <position position="166"/>
    </location>
</feature>
<feature type="binding site" evidence="3">
    <location>
        <position position="99"/>
    </location>
    <ligand>
        <name>Mn(2+)</name>
        <dbReference type="ChEBI" id="CHEBI:29035"/>
        <label>2</label>
    </ligand>
</feature>
<feature type="binding site" evidence="3">
    <location>
        <position position="132"/>
    </location>
    <ligand>
        <name>Mn(2+)</name>
        <dbReference type="ChEBI" id="CHEBI:29035"/>
        <label>1</label>
    </ligand>
</feature>
<feature type="binding site" evidence="3">
    <location>
        <position position="132"/>
    </location>
    <ligand>
        <name>Mn(2+)</name>
        <dbReference type="ChEBI" id="CHEBI:29035"/>
        <label>2</label>
    </ligand>
</feature>
<feature type="binding site" description="in other chain" evidence="1">
    <location>
        <begin position="166"/>
        <end position="167"/>
    </location>
    <ligand>
        <name>substrate</name>
        <note>ligand shared between homodimeric partners</note>
    </ligand>
</feature>
<feature type="binding site" evidence="3">
    <location>
        <position position="167"/>
    </location>
    <ligand>
        <name>Mn(2+)</name>
        <dbReference type="ChEBI" id="CHEBI:29035"/>
        <label>1</label>
    </ligand>
</feature>
<feature type="binding site" evidence="3">
    <location>
        <position position="195"/>
    </location>
    <ligand>
        <name>Mn(2+)</name>
        <dbReference type="ChEBI" id="CHEBI:29035"/>
        <label>2</label>
    </ligand>
</feature>
<feature type="binding site" description="in other chain" evidence="1">
    <location>
        <position position="195"/>
    </location>
    <ligand>
        <name>substrate</name>
        <note>ligand shared between homodimeric partners</note>
    </ligand>
</feature>
<feature type="binding site" evidence="1">
    <location>
        <position position="228"/>
    </location>
    <ligand>
        <name>substrate</name>
        <note>ligand shared between homodimeric partners</note>
    </ligand>
</feature>
<feature type="binding site" evidence="1">
    <location>
        <position position="330"/>
    </location>
    <ligand>
        <name>substrate</name>
        <note>ligand shared between homodimeric partners</note>
    </ligand>
</feature>
<feature type="binding site" description="in other chain" evidence="1">
    <location>
        <position position="343"/>
    </location>
    <ligand>
        <name>substrate</name>
        <note>ligand shared between homodimeric partners</note>
    </ligand>
</feature>
<feature type="binding site" description="in other chain" evidence="1">
    <location>
        <position position="417"/>
    </location>
    <ligand>
        <name>substrate</name>
        <note>ligand shared between homodimeric partners</note>
    </ligand>
</feature>
<feature type="binding site" evidence="3">
    <location>
        <position position="445"/>
    </location>
    <ligand>
        <name>Mn(2+)</name>
        <dbReference type="ChEBI" id="CHEBI:29035"/>
        <label>1</label>
    </ligand>
</feature>
<feature type="binding site" description="in other chain" evidence="1">
    <location>
        <position position="445"/>
    </location>
    <ligand>
        <name>substrate</name>
        <note>ligand shared between homodimeric partners</note>
    </ligand>
</feature>
<feature type="site" description="Important for catalytic activity" evidence="1">
    <location>
        <position position="228"/>
    </location>
</feature>
<feature type="modified residue" description="N-acetylalanine" evidence="3">
    <location>
        <position position="2"/>
    </location>
</feature>
<feature type="modified residue" description="N6-acetyllysine" evidence="3">
    <location>
        <position position="9"/>
    </location>
</feature>
<feature type="modified residue" description="Phosphoserine" evidence="2">
    <location>
        <position position="58"/>
    </location>
</feature>
<feature type="modified residue" description="Phosphoserine" evidence="3">
    <location>
        <position position="299"/>
    </location>
</feature>
<feature type="sequence conflict" description="In Ref. 1; CAH92986." evidence="5" ref="1">
    <original>H</original>
    <variation>Y</variation>
    <location>
        <position position="126"/>
    </location>
</feature>
<feature type="sequence conflict" description="In Ref. 1; CAH92986." evidence="5" ref="1">
    <original>Y</original>
    <variation>N</variation>
    <location>
        <position position="190"/>
    </location>
</feature>
<feature type="sequence conflict" description="In Ref. 1; CAH92986." evidence="5" ref="1">
    <original>V</original>
    <variation>A</variation>
    <location>
        <position position="437"/>
    </location>
</feature>